<proteinExistence type="inferred from homology"/>
<keyword id="KW-0067">ATP-binding</keyword>
<keyword id="KW-0963">Cytoplasm</keyword>
<keyword id="KW-0227">DNA damage</keyword>
<keyword id="KW-0228">DNA excision</keyword>
<keyword id="KW-0234">DNA repair</keyword>
<keyword id="KW-0238">DNA-binding</keyword>
<keyword id="KW-0267">Excision nuclease</keyword>
<keyword id="KW-0479">Metal-binding</keyword>
<keyword id="KW-0547">Nucleotide-binding</keyword>
<keyword id="KW-0677">Repeat</keyword>
<keyword id="KW-0742">SOS response</keyword>
<keyword id="KW-0862">Zinc</keyword>
<keyword id="KW-0863">Zinc-finger</keyword>
<dbReference type="EMBL" id="AE003849">
    <property type="protein sequence ID" value="AAF85225.1"/>
    <property type="molecule type" value="Genomic_DNA"/>
</dbReference>
<dbReference type="PIR" id="C82560">
    <property type="entry name" value="C82560"/>
</dbReference>
<dbReference type="RefSeq" id="WP_010894871.1">
    <property type="nucleotide sequence ID" value="NC_002488.3"/>
</dbReference>
<dbReference type="SMR" id="Q9PAR9"/>
<dbReference type="STRING" id="160492.XF_2426"/>
<dbReference type="KEGG" id="xfa:XF_2426"/>
<dbReference type="eggNOG" id="COG0178">
    <property type="taxonomic scope" value="Bacteria"/>
</dbReference>
<dbReference type="HOGENOM" id="CLU_001370_0_2_6"/>
<dbReference type="Proteomes" id="UP000000812">
    <property type="component" value="Chromosome"/>
</dbReference>
<dbReference type="GO" id="GO:0005737">
    <property type="term" value="C:cytoplasm"/>
    <property type="evidence" value="ECO:0007669"/>
    <property type="project" value="UniProtKB-SubCell"/>
</dbReference>
<dbReference type="GO" id="GO:0009380">
    <property type="term" value="C:excinuclease repair complex"/>
    <property type="evidence" value="ECO:0007669"/>
    <property type="project" value="InterPro"/>
</dbReference>
<dbReference type="GO" id="GO:0005524">
    <property type="term" value="F:ATP binding"/>
    <property type="evidence" value="ECO:0007669"/>
    <property type="project" value="UniProtKB-UniRule"/>
</dbReference>
<dbReference type="GO" id="GO:0016887">
    <property type="term" value="F:ATP hydrolysis activity"/>
    <property type="evidence" value="ECO:0007669"/>
    <property type="project" value="InterPro"/>
</dbReference>
<dbReference type="GO" id="GO:0003677">
    <property type="term" value="F:DNA binding"/>
    <property type="evidence" value="ECO:0007669"/>
    <property type="project" value="UniProtKB-UniRule"/>
</dbReference>
<dbReference type="GO" id="GO:0009381">
    <property type="term" value="F:excinuclease ABC activity"/>
    <property type="evidence" value="ECO:0007669"/>
    <property type="project" value="UniProtKB-UniRule"/>
</dbReference>
<dbReference type="GO" id="GO:0008270">
    <property type="term" value="F:zinc ion binding"/>
    <property type="evidence" value="ECO:0007669"/>
    <property type="project" value="UniProtKB-UniRule"/>
</dbReference>
<dbReference type="GO" id="GO:0006289">
    <property type="term" value="P:nucleotide-excision repair"/>
    <property type="evidence" value="ECO:0007669"/>
    <property type="project" value="UniProtKB-UniRule"/>
</dbReference>
<dbReference type="GO" id="GO:0009432">
    <property type="term" value="P:SOS response"/>
    <property type="evidence" value="ECO:0007669"/>
    <property type="project" value="UniProtKB-UniRule"/>
</dbReference>
<dbReference type="CDD" id="cd03270">
    <property type="entry name" value="ABC_UvrA_I"/>
    <property type="match status" value="1"/>
</dbReference>
<dbReference type="CDD" id="cd03271">
    <property type="entry name" value="ABC_UvrA_II"/>
    <property type="match status" value="1"/>
</dbReference>
<dbReference type="FunFam" id="1.10.8.280:FF:000001">
    <property type="entry name" value="UvrABC system protein A"/>
    <property type="match status" value="1"/>
</dbReference>
<dbReference type="FunFam" id="1.20.1580.10:FF:000002">
    <property type="entry name" value="UvrABC system protein A"/>
    <property type="match status" value="1"/>
</dbReference>
<dbReference type="FunFam" id="3.40.50.300:FF:000028">
    <property type="entry name" value="UvrABC system protein A"/>
    <property type="match status" value="1"/>
</dbReference>
<dbReference type="Gene3D" id="1.10.8.280">
    <property type="entry name" value="ABC transporter ATPase domain-like"/>
    <property type="match status" value="1"/>
</dbReference>
<dbReference type="Gene3D" id="1.20.1580.10">
    <property type="entry name" value="ABC transporter ATPase like domain"/>
    <property type="match status" value="2"/>
</dbReference>
<dbReference type="Gene3D" id="3.30.1490.20">
    <property type="entry name" value="ATP-grasp fold, A domain"/>
    <property type="match status" value="1"/>
</dbReference>
<dbReference type="Gene3D" id="3.40.50.300">
    <property type="entry name" value="P-loop containing nucleotide triphosphate hydrolases"/>
    <property type="match status" value="2"/>
</dbReference>
<dbReference type="HAMAP" id="MF_00205">
    <property type="entry name" value="UvrA"/>
    <property type="match status" value="1"/>
</dbReference>
<dbReference type="InterPro" id="IPR003439">
    <property type="entry name" value="ABC_transporter-like_ATP-bd"/>
</dbReference>
<dbReference type="InterPro" id="IPR017871">
    <property type="entry name" value="ABC_transporter-like_CS"/>
</dbReference>
<dbReference type="InterPro" id="IPR013815">
    <property type="entry name" value="ATP_grasp_subdomain_1"/>
</dbReference>
<dbReference type="InterPro" id="IPR027417">
    <property type="entry name" value="P-loop_NTPase"/>
</dbReference>
<dbReference type="InterPro" id="IPR004602">
    <property type="entry name" value="UvrA"/>
</dbReference>
<dbReference type="InterPro" id="IPR041552">
    <property type="entry name" value="UvrA_DNA-bd"/>
</dbReference>
<dbReference type="InterPro" id="IPR041102">
    <property type="entry name" value="UvrA_inter"/>
</dbReference>
<dbReference type="NCBIfam" id="NF001503">
    <property type="entry name" value="PRK00349.1"/>
    <property type="match status" value="1"/>
</dbReference>
<dbReference type="NCBIfam" id="TIGR00630">
    <property type="entry name" value="uvra"/>
    <property type="match status" value="1"/>
</dbReference>
<dbReference type="PANTHER" id="PTHR43152">
    <property type="entry name" value="UVRABC SYSTEM PROTEIN A"/>
    <property type="match status" value="1"/>
</dbReference>
<dbReference type="PANTHER" id="PTHR43152:SF3">
    <property type="entry name" value="UVRABC SYSTEM PROTEIN A"/>
    <property type="match status" value="1"/>
</dbReference>
<dbReference type="Pfam" id="PF17755">
    <property type="entry name" value="UvrA_DNA-bind"/>
    <property type="match status" value="1"/>
</dbReference>
<dbReference type="Pfam" id="PF17760">
    <property type="entry name" value="UvrA_inter"/>
    <property type="match status" value="1"/>
</dbReference>
<dbReference type="SUPFAM" id="SSF52540">
    <property type="entry name" value="P-loop containing nucleoside triphosphate hydrolases"/>
    <property type="match status" value="2"/>
</dbReference>
<dbReference type="PROSITE" id="PS00211">
    <property type="entry name" value="ABC_TRANSPORTER_1"/>
    <property type="match status" value="2"/>
</dbReference>
<dbReference type="PROSITE" id="PS50893">
    <property type="entry name" value="ABC_TRANSPORTER_2"/>
    <property type="match status" value="2"/>
</dbReference>
<name>UVRA_XYLFA</name>
<comment type="function">
    <text evidence="1">The UvrABC repair system catalyzes the recognition and processing of DNA lesions. UvrA is an ATPase and a DNA-binding protein. A damage recognition complex composed of 2 UvrA and 2 UvrB subunits scans DNA for abnormalities. When the presence of a lesion has been verified by UvrB, the UvrA molecules dissociate.</text>
</comment>
<comment type="subunit">
    <text evidence="1">Forms a heterotetramer with UvrB during the search for lesions.</text>
</comment>
<comment type="subcellular location">
    <subcellularLocation>
        <location evidence="1">Cytoplasm</location>
    </subcellularLocation>
</comment>
<comment type="similarity">
    <text evidence="1">Belongs to the ABC transporter superfamily. UvrA family.</text>
</comment>
<gene>
    <name evidence="1" type="primary">uvrA</name>
    <name type="ordered locus">XF_2426</name>
</gene>
<sequence length="965" mass="106897">MTALIRIRGARTHNLKNLDLDLPRNTLIVITGLSGSGKSSLAFDTIYAEGQRRYVESLSAYARQFLSVMEKPDLDQIEGLSPAISIEQKSTSHNPRSTVGTITEIYDYLRLLYARVGQPRCPDHHYPLEAQTVSQMVDHVLTLDPEQRYMLLAPVVRERKGEHTQVFEQLRAQGFVRVRVDGELYEIDVVPTLTLRQKHTIEAVIDRFRPREDIKQRLAESFETALKLGNGMASVQTLDTTTTTPHLFSSKYSCPVCDYSLPELEPRLFSFNAPMGACPACNGLGVTEFFDPAKVVIHPDLSLSAGAVRGWDRRNAYYFQLIASLAKHYTFDIDASWESLPEEIRHTILFGSGDEQINFIYLTEAGGRTKRKHRFEGIVPNLERRYRETESAAVREELAKYVSTRTCPECGGTRLNRAARNVFVADRTLPELTVLPINDALEFFKTLRLPGWRGEIAIKIVKEIGERLGFLVDVGLDYLTLERKADTLSGGEAQRIRLASQIGAGLVGVMYVLDEPSIGLHQRDNERLLGTLTRLRDLGNTVIVVEHDEDAIRQADHILDIGPGAGVHGGEICAQGSLEQIMAAPRSLTGQYLSGRRRIEIPKQRHPPNATKMLHLRGACGNNLKGVNLDIPEGLFTCITGVSGSGKSTLINDTLFTLAANEINGASHPIAPYASVDGLELFDKVVDIDQSPIGRTPRSNPATYTGMFTPLRELFAQVPEARARGYSPGRFSFNVRGGRCEACEGDGLIKVEMHFLPDVYVPCDVCHGKRYNRETLEIRYKGYNINDVLEMTVEDALKLFEAVPAIARKLETLVDVGLSYLKLGQSATTLSGGEAQRVKLSKELSRRDTGRTLYILDEPTTGLHFYDIEALLAVLHKLRDAGNTVIVIEHNLDVIKTADWVIDLGPEGGGRGGEILVAGTPEAVAAHPHSHTGHFLAKLLPPKDVSNCGHRDPGEEVDIAQTVHR</sequence>
<organism>
    <name type="scientific">Xylella fastidiosa (strain 9a5c)</name>
    <dbReference type="NCBI Taxonomy" id="160492"/>
    <lineage>
        <taxon>Bacteria</taxon>
        <taxon>Pseudomonadati</taxon>
        <taxon>Pseudomonadota</taxon>
        <taxon>Gammaproteobacteria</taxon>
        <taxon>Lysobacterales</taxon>
        <taxon>Lysobacteraceae</taxon>
        <taxon>Xylella</taxon>
    </lineage>
</organism>
<accession>Q9PAR9</accession>
<feature type="chain" id="PRO_0000093118" description="UvrABC system protein A">
    <location>
        <begin position="1"/>
        <end position="965"/>
    </location>
</feature>
<feature type="domain" description="ABC transporter 1" evidence="1">
    <location>
        <begin position="311"/>
        <end position="588"/>
    </location>
</feature>
<feature type="domain" description="ABC transporter 2" evidence="1">
    <location>
        <begin position="608"/>
        <end position="937"/>
    </location>
</feature>
<feature type="zinc finger region" description="C4-type" evidence="1">
    <location>
        <begin position="254"/>
        <end position="281"/>
    </location>
</feature>
<feature type="zinc finger region" description="C4-type" evidence="1">
    <location>
        <begin position="740"/>
        <end position="766"/>
    </location>
</feature>
<feature type="binding site" evidence="1">
    <location>
        <begin position="32"/>
        <end position="39"/>
    </location>
    <ligand>
        <name>ATP</name>
        <dbReference type="ChEBI" id="CHEBI:30616"/>
    </ligand>
</feature>
<feature type="binding site" evidence="1">
    <location>
        <begin position="641"/>
        <end position="648"/>
    </location>
    <ligand>
        <name>ATP</name>
        <dbReference type="ChEBI" id="CHEBI:30616"/>
    </ligand>
</feature>
<protein>
    <recommendedName>
        <fullName evidence="1">UvrABC system protein A</fullName>
        <shortName evidence="1">UvrA protein</shortName>
    </recommendedName>
    <alternativeName>
        <fullName evidence="1">Excinuclease ABC subunit A</fullName>
    </alternativeName>
</protein>
<reference key="1">
    <citation type="journal article" date="2000" name="Nature">
        <title>The genome sequence of the plant pathogen Xylella fastidiosa.</title>
        <authorList>
            <person name="Simpson A.J.G."/>
            <person name="Reinach F.C."/>
            <person name="Arruda P."/>
            <person name="Abreu F.A."/>
            <person name="Acencio M."/>
            <person name="Alvarenga R."/>
            <person name="Alves L.M.C."/>
            <person name="Araya J.E."/>
            <person name="Baia G.S."/>
            <person name="Baptista C.S."/>
            <person name="Barros M.H."/>
            <person name="Bonaccorsi E.D."/>
            <person name="Bordin S."/>
            <person name="Bove J.M."/>
            <person name="Briones M.R.S."/>
            <person name="Bueno M.R.P."/>
            <person name="Camargo A.A."/>
            <person name="Camargo L.E.A."/>
            <person name="Carraro D.M."/>
            <person name="Carrer H."/>
            <person name="Colauto N.B."/>
            <person name="Colombo C."/>
            <person name="Costa F.F."/>
            <person name="Costa M.C.R."/>
            <person name="Costa-Neto C.M."/>
            <person name="Coutinho L.L."/>
            <person name="Cristofani M."/>
            <person name="Dias-Neto E."/>
            <person name="Docena C."/>
            <person name="El-Dorry H."/>
            <person name="Facincani A.P."/>
            <person name="Ferreira A.J.S."/>
            <person name="Ferreira V.C.A."/>
            <person name="Ferro J.A."/>
            <person name="Fraga J.S."/>
            <person name="Franca S.C."/>
            <person name="Franco M.C."/>
            <person name="Frohme M."/>
            <person name="Furlan L.R."/>
            <person name="Garnier M."/>
            <person name="Goldman G.H."/>
            <person name="Goldman M.H.S."/>
            <person name="Gomes S.L."/>
            <person name="Gruber A."/>
            <person name="Ho P.L."/>
            <person name="Hoheisel J.D."/>
            <person name="Junqueira M.L."/>
            <person name="Kemper E.L."/>
            <person name="Kitajima J.P."/>
            <person name="Krieger J.E."/>
            <person name="Kuramae E.E."/>
            <person name="Laigret F."/>
            <person name="Lambais M.R."/>
            <person name="Leite L.C.C."/>
            <person name="Lemos E.G.M."/>
            <person name="Lemos M.V.F."/>
            <person name="Lopes S.A."/>
            <person name="Lopes C.R."/>
            <person name="Machado J.A."/>
            <person name="Machado M.A."/>
            <person name="Madeira A.M.B.N."/>
            <person name="Madeira H.M.F."/>
            <person name="Marino C.L."/>
            <person name="Marques M.V."/>
            <person name="Martins E.A.L."/>
            <person name="Martins E.M.F."/>
            <person name="Matsukuma A.Y."/>
            <person name="Menck C.F.M."/>
            <person name="Miracca E.C."/>
            <person name="Miyaki C.Y."/>
            <person name="Monteiro-Vitorello C.B."/>
            <person name="Moon D.H."/>
            <person name="Nagai M.A."/>
            <person name="Nascimento A.L.T.O."/>
            <person name="Netto L.E.S."/>
            <person name="Nhani A. Jr."/>
            <person name="Nobrega F.G."/>
            <person name="Nunes L.R."/>
            <person name="Oliveira M.A."/>
            <person name="de Oliveira M.C."/>
            <person name="de Oliveira R.C."/>
            <person name="Palmieri D.A."/>
            <person name="Paris A."/>
            <person name="Peixoto B.R."/>
            <person name="Pereira G.A.G."/>
            <person name="Pereira H.A. Jr."/>
            <person name="Pesquero J.B."/>
            <person name="Quaggio R.B."/>
            <person name="Roberto P.G."/>
            <person name="Rodrigues V."/>
            <person name="de Rosa A.J.M."/>
            <person name="de Rosa V.E. Jr."/>
            <person name="de Sa R.G."/>
            <person name="Santelli R.V."/>
            <person name="Sawasaki H.E."/>
            <person name="da Silva A.C.R."/>
            <person name="da Silva A.M."/>
            <person name="da Silva F.R."/>
            <person name="Silva W.A. Jr."/>
            <person name="da Silveira J.F."/>
            <person name="Silvestri M.L.Z."/>
            <person name="Siqueira W.J."/>
            <person name="de Souza A.A."/>
            <person name="de Souza A.P."/>
            <person name="Terenzi M.F."/>
            <person name="Truffi D."/>
            <person name="Tsai S.M."/>
            <person name="Tsuhako M.H."/>
            <person name="Vallada H."/>
            <person name="Van Sluys M.A."/>
            <person name="Verjovski-Almeida S."/>
            <person name="Vettore A.L."/>
            <person name="Zago M.A."/>
            <person name="Zatz M."/>
            <person name="Meidanis J."/>
            <person name="Setubal J.C."/>
        </authorList>
    </citation>
    <scope>NUCLEOTIDE SEQUENCE [LARGE SCALE GENOMIC DNA]</scope>
    <source>
        <strain>9a5c</strain>
    </source>
</reference>
<evidence type="ECO:0000255" key="1">
    <source>
        <dbReference type="HAMAP-Rule" id="MF_00205"/>
    </source>
</evidence>